<comment type="function">
    <text evidence="1">ATP-dependent specificity component of the Clp protease. It directs the protease to specific substrates. Can perform chaperone functions in the absence of ClpP.</text>
</comment>
<comment type="subunit">
    <text evidence="1">Component of the ClpX-ClpP complex. Forms a hexameric ring that, in the presence of ATP, binds to fourteen ClpP subunits assembled into a disk-like structure with a central cavity, resembling the structure of eukaryotic proteasomes.</text>
</comment>
<comment type="similarity">
    <text evidence="1">Belongs to the ClpX chaperone family.</text>
</comment>
<organism>
    <name type="scientific">Pelodictyon phaeoclathratiforme (strain DSM 5477 / BU-1)</name>
    <dbReference type="NCBI Taxonomy" id="324925"/>
    <lineage>
        <taxon>Bacteria</taxon>
        <taxon>Pseudomonadati</taxon>
        <taxon>Chlorobiota</taxon>
        <taxon>Chlorobiia</taxon>
        <taxon>Chlorobiales</taxon>
        <taxon>Chlorobiaceae</taxon>
        <taxon>Chlorobium/Pelodictyon group</taxon>
        <taxon>Pelodictyon</taxon>
    </lineage>
</organism>
<dbReference type="EMBL" id="CP001110">
    <property type="protein sequence ID" value="ACF43076.1"/>
    <property type="molecule type" value="Genomic_DNA"/>
</dbReference>
<dbReference type="RefSeq" id="WP_012507571.1">
    <property type="nucleotide sequence ID" value="NC_011060.1"/>
</dbReference>
<dbReference type="SMR" id="B4SEI4"/>
<dbReference type="STRING" id="324925.Ppha_0784"/>
<dbReference type="KEGG" id="pph:Ppha_0784"/>
<dbReference type="eggNOG" id="COG1219">
    <property type="taxonomic scope" value="Bacteria"/>
</dbReference>
<dbReference type="HOGENOM" id="CLU_014218_8_2_10"/>
<dbReference type="OrthoDB" id="9804062at2"/>
<dbReference type="Proteomes" id="UP000002724">
    <property type="component" value="Chromosome"/>
</dbReference>
<dbReference type="GO" id="GO:0009376">
    <property type="term" value="C:HslUV protease complex"/>
    <property type="evidence" value="ECO:0007669"/>
    <property type="project" value="TreeGrafter"/>
</dbReference>
<dbReference type="GO" id="GO:0005524">
    <property type="term" value="F:ATP binding"/>
    <property type="evidence" value="ECO:0007669"/>
    <property type="project" value="UniProtKB-UniRule"/>
</dbReference>
<dbReference type="GO" id="GO:0016887">
    <property type="term" value="F:ATP hydrolysis activity"/>
    <property type="evidence" value="ECO:0007669"/>
    <property type="project" value="InterPro"/>
</dbReference>
<dbReference type="GO" id="GO:0140662">
    <property type="term" value="F:ATP-dependent protein folding chaperone"/>
    <property type="evidence" value="ECO:0007669"/>
    <property type="project" value="InterPro"/>
</dbReference>
<dbReference type="GO" id="GO:0046983">
    <property type="term" value="F:protein dimerization activity"/>
    <property type="evidence" value="ECO:0007669"/>
    <property type="project" value="InterPro"/>
</dbReference>
<dbReference type="GO" id="GO:0051082">
    <property type="term" value="F:unfolded protein binding"/>
    <property type="evidence" value="ECO:0007669"/>
    <property type="project" value="UniProtKB-UniRule"/>
</dbReference>
<dbReference type="GO" id="GO:0008270">
    <property type="term" value="F:zinc ion binding"/>
    <property type="evidence" value="ECO:0007669"/>
    <property type="project" value="InterPro"/>
</dbReference>
<dbReference type="GO" id="GO:0051301">
    <property type="term" value="P:cell division"/>
    <property type="evidence" value="ECO:0007669"/>
    <property type="project" value="TreeGrafter"/>
</dbReference>
<dbReference type="GO" id="GO:0051603">
    <property type="term" value="P:proteolysis involved in protein catabolic process"/>
    <property type="evidence" value="ECO:0007669"/>
    <property type="project" value="TreeGrafter"/>
</dbReference>
<dbReference type="CDD" id="cd19497">
    <property type="entry name" value="RecA-like_ClpX"/>
    <property type="match status" value="1"/>
</dbReference>
<dbReference type="FunFam" id="1.10.8.60:FF:000002">
    <property type="entry name" value="ATP-dependent Clp protease ATP-binding subunit ClpX"/>
    <property type="match status" value="1"/>
</dbReference>
<dbReference type="Gene3D" id="1.10.8.60">
    <property type="match status" value="1"/>
</dbReference>
<dbReference type="Gene3D" id="6.20.220.10">
    <property type="entry name" value="ClpX chaperone, C4-type zinc finger domain"/>
    <property type="match status" value="1"/>
</dbReference>
<dbReference type="Gene3D" id="3.40.50.300">
    <property type="entry name" value="P-loop containing nucleotide triphosphate hydrolases"/>
    <property type="match status" value="1"/>
</dbReference>
<dbReference type="HAMAP" id="MF_00175">
    <property type="entry name" value="ClpX"/>
    <property type="match status" value="1"/>
</dbReference>
<dbReference type="InterPro" id="IPR003593">
    <property type="entry name" value="AAA+_ATPase"/>
</dbReference>
<dbReference type="InterPro" id="IPR050052">
    <property type="entry name" value="ATP-dep_Clp_protease_ClpX"/>
</dbReference>
<dbReference type="InterPro" id="IPR003959">
    <property type="entry name" value="ATPase_AAA_core"/>
</dbReference>
<dbReference type="InterPro" id="IPR019489">
    <property type="entry name" value="Clp_ATPase_C"/>
</dbReference>
<dbReference type="InterPro" id="IPR004487">
    <property type="entry name" value="Clp_protease_ATP-bd_su_ClpX"/>
</dbReference>
<dbReference type="InterPro" id="IPR046425">
    <property type="entry name" value="ClpX_bact"/>
</dbReference>
<dbReference type="InterPro" id="IPR027417">
    <property type="entry name" value="P-loop_NTPase"/>
</dbReference>
<dbReference type="InterPro" id="IPR010603">
    <property type="entry name" value="Znf_CppX_C4"/>
</dbReference>
<dbReference type="InterPro" id="IPR038366">
    <property type="entry name" value="Znf_CppX_C4_sf"/>
</dbReference>
<dbReference type="NCBIfam" id="TIGR00382">
    <property type="entry name" value="clpX"/>
    <property type="match status" value="1"/>
</dbReference>
<dbReference type="NCBIfam" id="NF003745">
    <property type="entry name" value="PRK05342.1"/>
    <property type="match status" value="1"/>
</dbReference>
<dbReference type="PANTHER" id="PTHR48102:SF7">
    <property type="entry name" value="ATP-DEPENDENT CLP PROTEASE ATP-BINDING SUBUNIT CLPX-LIKE, MITOCHONDRIAL"/>
    <property type="match status" value="1"/>
</dbReference>
<dbReference type="PANTHER" id="PTHR48102">
    <property type="entry name" value="ATP-DEPENDENT CLP PROTEASE ATP-BINDING SUBUNIT CLPX-LIKE, MITOCHONDRIAL-RELATED"/>
    <property type="match status" value="1"/>
</dbReference>
<dbReference type="Pfam" id="PF07724">
    <property type="entry name" value="AAA_2"/>
    <property type="match status" value="1"/>
</dbReference>
<dbReference type="Pfam" id="PF10431">
    <property type="entry name" value="ClpB_D2-small"/>
    <property type="match status" value="1"/>
</dbReference>
<dbReference type="Pfam" id="PF06689">
    <property type="entry name" value="zf-C4_ClpX"/>
    <property type="match status" value="1"/>
</dbReference>
<dbReference type="SMART" id="SM00382">
    <property type="entry name" value="AAA"/>
    <property type="match status" value="1"/>
</dbReference>
<dbReference type="SMART" id="SM01086">
    <property type="entry name" value="ClpB_D2-small"/>
    <property type="match status" value="1"/>
</dbReference>
<dbReference type="SMART" id="SM00994">
    <property type="entry name" value="zf-C4_ClpX"/>
    <property type="match status" value="1"/>
</dbReference>
<dbReference type="SUPFAM" id="SSF57716">
    <property type="entry name" value="Glucocorticoid receptor-like (DNA-binding domain)"/>
    <property type="match status" value="1"/>
</dbReference>
<dbReference type="SUPFAM" id="SSF52540">
    <property type="entry name" value="P-loop containing nucleoside triphosphate hydrolases"/>
    <property type="match status" value="1"/>
</dbReference>
<dbReference type="PROSITE" id="PS51902">
    <property type="entry name" value="CLPX_ZB"/>
    <property type="match status" value="1"/>
</dbReference>
<keyword id="KW-0067">ATP-binding</keyword>
<keyword id="KW-0143">Chaperone</keyword>
<keyword id="KW-0479">Metal-binding</keyword>
<keyword id="KW-0547">Nucleotide-binding</keyword>
<keyword id="KW-1185">Reference proteome</keyword>
<keyword id="KW-0862">Zinc</keyword>
<protein>
    <recommendedName>
        <fullName evidence="1">ATP-dependent Clp protease ATP-binding subunit ClpX</fullName>
    </recommendedName>
</protein>
<evidence type="ECO:0000255" key="1">
    <source>
        <dbReference type="HAMAP-Rule" id="MF_00175"/>
    </source>
</evidence>
<evidence type="ECO:0000255" key="2">
    <source>
        <dbReference type="PROSITE-ProRule" id="PRU01250"/>
    </source>
</evidence>
<gene>
    <name evidence="1" type="primary">clpX</name>
    <name type="ordered locus">Ppha_0784</name>
</gene>
<accession>B4SEI4</accession>
<proteinExistence type="inferred from homology"/>
<sequence>MTREREPGKSRTKSGSGTTDQVFCSFCGRSAQEVNSMIAGPKAFICDRCIKTSFDILRKEVNAVPPVAKVPEQPFQPRLVSPKAIMDSLGQYVVGQDAAKKSLAVAVYNHYKRIDSQEQQQADDEVVIEKSNILLIGPTGTGKTLLAQTLANLLEVPFSIVDATSLTEAGYVGDDVETILARLLHAADFNLERTERGIIYVDEIDKIARKSANVSITRDVSGEGVQQALLKILEGAVVGVPPKGGRKHPEQQLININTKNILFICGGAFEGLDKLIAKRVSKSSMGFGAKVKTTQIGYDPEILKLVMQDDLHEYGLIPEFIGRLPVISTLEMLDEKALRNILVEPKNAITKQYKKLFEMDGVELEFTEEALDKVVKIAIERGTGARALRSVLENVMIDIMFEIPSMKNTHKCVITADTIENKAAPEYFSGDRKKKKIA</sequence>
<name>CLPX_PELPB</name>
<feature type="chain" id="PRO_1000097979" description="ATP-dependent Clp protease ATP-binding subunit ClpX">
    <location>
        <begin position="1"/>
        <end position="438"/>
    </location>
</feature>
<feature type="domain" description="ClpX-type ZB" evidence="2">
    <location>
        <begin position="12"/>
        <end position="65"/>
    </location>
</feature>
<feature type="binding site" evidence="2">
    <location>
        <position position="24"/>
    </location>
    <ligand>
        <name>Zn(2+)</name>
        <dbReference type="ChEBI" id="CHEBI:29105"/>
    </ligand>
</feature>
<feature type="binding site" evidence="2">
    <location>
        <position position="27"/>
    </location>
    <ligand>
        <name>Zn(2+)</name>
        <dbReference type="ChEBI" id="CHEBI:29105"/>
    </ligand>
</feature>
<feature type="binding site" evidence="2">
    <location>
        <position position="46"/>
    </location>
    <ligand>
        <name>Zn(2+)</name>
        <dbReference type="ChEBI" id="CHEBI:29105"/>
    </ligand>
</feature>
<feature type="binding site" evidence="2">
    <location>
        <position position="49"/>
    </location>
    <ligand>
        <name>Zn(2+)</name>
        <dbReference type="ChEBI" id="CHEBI:29105"/>
    </ligand>
</feature>
<feature type="binding site" evidence="1">
    <location>
        <begin position="138"/>
        <end position="145"/>
    </location>
    <ligand>
        <name>ATP</name>
        <dbReference type="ChEBI" id="CHEBI:30616"/>
    </ligand>
</feature>
<reference key="1">
    <citation type="submission" date="2008-06" db="EMBL/GenBank/DDBJ databases">
        <title>Complete sequence of Pelodictyon phaeoclathratiforme BU-1.</title>
        <authorList>
            <consortium name="US DOE Joint Genome Institute"/>
            <person name="Lucas S."/>
            <person name="Copeland A."/>
            <person name="Lapidus A."/>
            <person name="Glavina del Rio T."/>
            <person name="Dalin E."/>
            <person name="Tice H."/>
            <person name="Bruce D."/>
            <person name="Goodwin L."/>
            <person name="Pitluck S."/>
            <person name="Schmutz J."/>
            <person name="Larimer F."/>
            <person name="Land M."/>
            <person name="Hauser L."/>
            <person name="Kyrpides N."/>
            <person name="Mikhailova N."/>
            <person name="Liu Z."/>
            <person name="Li T."/>
            <person name="Zhao F."/>
            <person name="Overmann J."/>
            <person name="Bryant D.A."/>
            <person name="Richardson P."/>
        </authorList>
    </citation>
    <scope>NUCLEOTIDE SEQUENCE [LARGE SCALE GENOMIC DNA]</scope>
    <source>
        <strain>DSM 5477 / BU-1</strain>
    </source>
</reference>